<dbReference type="EC" id="2.1.1.222" evidence="1"/>
<dbReference type="EC" id="2.1.1.64" evidence="1"/>
<dbReference type="EMBL" id="AM933172">
    <property type="protein sequence ID" value="CAR33842.1"/>
    <property type="molecule type" value="Genomic_DNA"/>
</dbReference>
<dbReference type="RefSeq" id="WP_001091008.1">
    <property type="nucleotide sequence ID" value="NC_011294.1"/>
</dbReference>
<dbReference type="SMR" id="B5R249"/>
<dbReference type="KEGG" id="set:SEN2258"/>
<dbReference type="HOGENOM" id="CLU_042432_5_0_6"/>
<dbReference type="UniPathway" id="UPA00232"/>
<dbReference type="Proteomes" id="UP000000613">
    <property type="component" value="Chromosome"/>
</dbReference>
<dbReference type="GO" id="GO:0102208">
    <property type="term" value="F:2-polyprenyl-6-hydroxyphenol methylase activity"/>
    <property type="evidence" value="ECO:0007669"/>
    <property type="project" value="UniProtKB-EC"/>
</dbReference>
<dbReference type="GO" id="GO:0061542">
    <property type="term" value="F:3-demethylubiquinol 3-O-methyltransferase activity"/>
    <property type="evidence" value="ECO:0007669"/>
    <property type="project" value="UniProtKB-UniRule"/>
</dbReference>
<dbReference type="GO" id="GO:0010420">
    <property type="term" value="F:polyprenyldihydroxybenzoate methyltransferase activity"/>
    <property type="evidence" value="ECO:0007669"/>
    <property type="project" value="InterPro"/>
</dbReference>
<dbReference type="GO" id="GO:0032259">
    <property type="term" value="P:methylation"/>
    <property type="evidence" value="ECO:0007669"/>
    <property type="project" value="UniProtKB-KW"/>
</dbReference>
<dbReference type="CDD" id="cd02440">
    <property type="entry name" value="AdoMet_MTases"/>
    <property type="match status" value="1"/>
</dbReference>
<dbReference type="FunFam" id="3.40.50.150:FF:000028">
    <property type="entry name" value="Ubiquinone biosynthesis O-methyltransferase"/>
    <property type="match status" value="1"/>
</dbReference>
<dbReference type="Gene3D" id="3.40.50.150">
    <property type="entry name" value="Vaccinia Virus protein VP39"/>
    <property type="match status" value="1"/>
</dbReference>
<dbReference type="HAMAP" id="MF_00472">
    <property type="entry name" value="UbiG"/>
    <property type="match status" value="1"/>
</dbReference>
<dbReference type="InterPro" id="IPR029063">
    <property type="entry name" value="SAM-dependent_MTases_sf"/>
</dbReference>
<dbReference type="InterPro" id="IPR010233">
    <property type="entry name" value="UbiG_MeTrfase"/>
</dbReference>
<dbReference type="NCBIfam" id="TIGR01983">
    <property type="entry name" value="UbiG"/>
    <property type="match status" value="1"/>
</dbReference>
<dbReference type="PANTHER" id="PTHR43464">
    <property type="entry name" value="METHYLTRANSFERASE"/>
    <property type="match status" value="1"/>
</dbReference>
<dbReference type="PANTHER" id="PTHR43464:SF19">
    <property type="entry name" value="UBIQUINONE BIOSYNTHESIS O-METHYLTRANSFERASE, MITOCHONDRIAL"/>
    <property type="match status" value="1"/>
</dbReference>
<dbReference type="Pfam" id="PF13489">
    <property type="entry name" value="Methyltransf_23"/>
    <property type="match status" value="1"/>
</dbReference>
<dbReference type="SUPFAM" id="SSF53335">
    <property type="entry name" value="S-adenosyl-L-methionine-dependent methyltransferases"/>
    <property type="match status" value="1"/>
</dbReference>
<protein>
    <recommendedName>
        <fullName evidence="1">Ubiquinone biosynthesis O-methyltransferase</fullName>
    </recommendedName>
    <alternativeName>
        <fullName evidence="1">2-polyprenyl-6-hydroxyphenol methylase</fullName>
        <ecNumber evidence="1">2.1.1.222</ecNumber>
    </alternativeName>
    <alternativeName>
        <fullName evidence="1">3-demethylubiquinone 3-O-methyltransferase</fullName>
        <ecNumber evidence="1">2.1.1.64</ecNumber>
    </alternativeName>
</protein>
<sequence>MNTEKPSVAHNVDHNEIAKFEAVASRWWDLEGEFKPLHRINPLRLGYITERSGGLFGKKVLDVGCGGGILAESMAREGATVTGLDMGFEPLQVAKLHALESGIEVEYMQETVEEHAAKHAQQYDVVTCMEMLEHVPDPQSVVHACAQLVKPGGEVFFSTLNRNGKSWLMAVVGAEYILRMVPKGTHDVKKFIKPAELLSWVDETVLKEQHITGLHYNPITNTFKLGPGVDVNYMLHTRAKKA</sequence>
<accession>B5R249</accession>
<proteinExistence type="inferred from homology"/>
<evidence type="ECO:0000255" key="1">
    <source>
        <dbReference type="HAMAP-Rule" id="MF_00472"/>
    </source>
</evidence>
<gene>
    <name evidence="1" type="primary">ubiG</name>
    <name type="ordered locus">SEN2258</name>
</gene>
<keyword id="KW-0489">Methyltransferase</keyword>
<keyword id="KW-0949">S-adenosyl-L-methionine</keyword>
<keyword id="KW-0808">Transferase</keyword>
<keyword id="KW-0831">Ubiquinone biosynthesis</keyword>
<feature type="chain" id="PRO_1000199697" description="Ubiquinone biosynthesis O-methyltransferase">
    <location>
        <begin position="1"/>
        <end position="242"/>
    </location>
</feature>
<feature type="binding site" evidence="1">
    <location>
        <position position="44"/>
    </location>
    <ligand>
        <name>S-adenosyl-L-methionine</name>
        <dbReference type="ChEBI" id="CHEBI:59789"/>
    </ligand>
</feature>
<feature type="binding site" evidence="1">
    <location>
        <position position="64"/>
    </location>
    <ligand>
        <name>S-adenosyl-L-methionine</name>
        <dbReference type="ChEBI" id="CHEBI:59789"/>
    </ligand>
</feature>
<feature type="binding site" evidence="1">
    <location>
        <position position="85"/>
    </location>
    <ligand>
        <name>S-adenosyl-L-methionine</name>
        <dbReference type="ChEBI" id="CHEBI:59789"/>
    </ligand>
</feature>
<feature type="binding site" evidence="1">
    <location>
        <position position="129"/>
    </location>
    <ligand>
        <name>S-adenosyl-L-methionine</name>
        <dbReference type="ChEBI" id="CHEBI:59789"/>
    </ligand>
</feature>
<comment type="function">
    <text evidence="1">O-methyltransferase that catalyzes the 2 O-methylation steps in the ubiquinone biosynthetic pathway.</text>
</comment>
<comment type="catalytic activity">
    <reaction evidence="1">
        <text>a 3-demethylubiquinol + S-adenosyl-L-methionine = a ubiquinol + S-adenosyl-L-homocysteine + H(+)</text>
        <dbReference type="Rhea" id="RHEA:44380"/>
        <dbReference type="Rhea" id="RHEA-COMP:9566"/>
        <dbReference type="Rhea" id="RHEA-COMP:10914"/>
        <dbReference type="ChEBI" id="CHEBI:15378"/>
        <dbReference type="ChEBI" id="CHEBI:17976"/>
        <dbReference type="ChEBI" id="CHEBI:57856"/>
        <dbReference type="ChEBI" id="CHEBI:59789"/>
        <dbReference type="ChEBI" id="CHEBI:84422"/>
        <dbReference type="EC" id="2.1.1.64"/>
    </reaction>
</comment>
<comment type="catalytic activity">
    <reaction evidence="1">
        <text>a 3-(all-trans-polyprenyl)benzene-1,2-diol + S-adenosyl-L-methionine = a 2-methoxy-6-(all-trans-polyprenyl)phenol + S-adenosyl-L-homocysteine + H(+)</text>
        <dbReference type="Rhea" id="RHEA:31411"/>
        <dbReference type="Rhea" id="RHEA-COMP:9550"/>
        <dbReference type="Rhea" id="RHEA-COMP:9551"/>
        <dbReference type="ChEBI" id="CHEBI:15378"/>
        <dbReference type="ChEBI" id="CHEBI:57856"/>
        <dbReference type="ChEBI" id="CHEBI:59789"/>
        <dbReference type="ChEBI" id="CHEBI:62729"/>
        <dbReference type="ChEBI" id="CHEBI:62731"/>
        <dbReference type="EC" id="2.1.1.222"/>
    </reaction>
</comment>
<comment type="pathway">
    <text evidence="1">Cofactor biosynthesis; ubiquinone biosynthesis.</text>
</comment>
<comment type="similarity">
    <text evidence="1">Belongs to the methyltransferase superfamily. UbiG/COQ3 family.</text>
</comment>
<organism>
    <name type="scientific">Salmonella enteritidis PT4 (strain P125109)</name>
    <dbReference type="NCBI Taxonomy" id="550537"/>
    <lineage>
        <taxon>Bacteria</taxon>
        <taxon>Pseudomonadati</taxon>
        <taxon>Pseudomonadota</taxon>
        <taxon>Gammaproteobacteria</taxon>
        <taxon>Enterobacterales</taxon>
        <taxon>Enterobacteriaceae</taxon>
        <taxon>Salmonella</taxon>
    </lineage>
</organism>
<reference key="1">
    <citation type="journal article" date="2008" name="Genome Res.">
        <title>Comparative genome analysis of Salmonella enteritidis PT4 and Salmonella gallinarum 287/91 provides insights into evolutionary and host adaptation pathways.</title>
        <authorList>
            <person name="Thomson N.R."/>
            <person name="Clayton D.J."/>
            <person name="Windhorst D."/>
            <person name="Vernikos G."/>
            <person name="Davidson S."/>
            <person name="Churcher C."/>
            <person name="Quail M.A."/>
            <person name="Stevens M."/>
            <person name="Jones M.A."/>
            <person name="Watson M."/>
            <person name="Barron A."/>
            <person name="Layton A."/>
            <person name="Pickard D."/>
            <person name="Kingsley R.A."/>
            <person name="Bignell A."/>
            <person name="Clark L."/>
            <person name="Harris B."/>
            <person name="Ormond D."/>
            <person name="Abdellah Z."/>
            <person name="Brooks K."/>
            <person name="Cherevach I."/>
            <person name="Chillingworth T."/>
            <person name="Woodward J."/>
            <person name="Norberczak H."/>
            <person name="Lord A."/>
            <person name="Arrowsmith C."/>
            <person name="Jagels K."/>
            <person name="Moule S."/>
            <person name="Mungall K."/>
            <person name="Saunders M."/>
            <person name="Whitehead S."/>
            <person name="Chabalgoity J.A."/>
            <person name="Maskell D."/>
            <person name="Humphreys T."/>
            <person name="Roberts M."/>
            <person name="Barrow P.A."/>
            <person name="Dougan G."/>
            <person name="Parkhill J."/>
        </authorList>
    </citation>
    <scope>NUCLEOTIDE SEQUENCE [LARGE SCALE GENOMIC DNA]</scope>
    <source>
        <strain>P125109</strain>
    </source>
</reference>
<name>UBIG_SALEP</name>